<feature type="chain" id="PRO_1000146562" description="Adenine deaminase">
    <location>
        <begin position="1"/>
        <end position="322"/>
    </location>
</feature>
<feature type="active site" description="Proton donor" evidence="1">
    <location>
        <position position="192"/>
    </location>
</feature>
<feature type="binding site" evidence="1">
    <location>
        <position position="11"/>
    </location>
    <ligand>
        <name>Zn(2+)</name>
        <dbReference type="ChEBI" id="CHEBI:29105"/>
        <note>catalytic</note>
    </ligand>
</feature>
<feature type="binding site" evidence="1">
    <location>
        <position position="13"/>
    </location>
    <ligand>
        <name>Zn(2+)</name>
        <dbReference type="ChEBI" id="CHEBI:29105"/>
        <note>catalytic</note>
    </ligand>
</feature>
<feature type="binding site" evidence="1">
    <location>
        <position position="189"/>
    </location>
    <ligand>
        <name>Zn(2+)</name>
        <dbReference type="ChEBI" id="CHEBI:29105"/>
        <note>catalytic</note>
    </ligand>
</feature>
<feature type="binding site" evidence="1">
    <location>
        <position position="270"/>
    </location>
    <ligand>
        <name>Zn(2+)</name>
        <dbReference type="ChEBI" id="CHEBI:29105"/>
        <note>catalytic</note>
    </ligand>
</feature>
<feature type="binding site" evidence="1">
    <location>
        <position position="271"/>
    </location>
    <ligand>
        <name>substrate</name>
    </ligand>
</feature>
<feature type="site" description="Important for catalytic activity" evidence="1">
    <location>
        <position position="213"/>
    </location>
</feature>
<sequence>MTSHLKKVELHCHLEGAAPPALTLAQARKYNVDTNAFMRDGVYLWKDFAEFLVCYDKVSEVYRTEEDYALLTETYLEELAGIGTIYSELIVSPDHGDRIGLGADAYMEGVSAGIRAAKEKSGIEARLIVTGERHFGPERVVKAAEYAAKSDNPLISGFNMAGEERMGRVADYARAFDIAREAGLGITIHAGEVCGAFSVADAVELVRPARIGHGVRAIEDADLVKRLADLGTVLEVCPGSNIALNVFPDFPSHPLRKLRDAGVRVTISSDDPPFFHTSLKREYELASTAFGFSDDEINAMTRTAIEAAFLDEATRAALLARL</sequence>
<keyword id="KW-0378">Hydrolase</keyword>
<keyword id="KW-0479">Metal-binding</keyword>
<keyword id="KW-0546">Nucleotide metabolism</keyword>
<keyword id="KW-0862">Zinc</keyword>
<protein>
    <recommendedName>
        <fullName evidence="1">Adenine deaminase</fullName>
        <shortName evidence="1">ADE</shortName>
        <ecNumber evidence="1">3.5.4.2</ecNumber>
    </recommendedName>
    <alternativeName>
        <fullName evidence="1">Adenine aminohydrolase</fullName>
        <shortName evidence="1">AAH</shortName>
    </alternativeName>
</protein>
<accession>B9J6V8</accession>
<reference key="1">
    <citation type="journal article" date="2009" name="J. Bacteriol.">
        <title>Genome sequences of three Agrobacterium biovars help elucidate the evolution of multichromosome genomes in bacteria.</title>
        <authorList>
            <person name="Slater S.C."/>
            <person name="Goldman B.S."/>
            <person name="Goodner B."/>
            <person name="Setubal J.C."/>
            <person name="Farrand S.K."/>
            <person name="Nester E.W."/>
            <person name="Burr T.J."/>
            <person name="Banta L."/>
            <person name="Dickerman A.W."/>
            <person name="Paulsen I."/>
            <person name="Otten L."/>
            <person name="Suen G."/>
            <person name="Welch R."/>
            <person name="Almeida N.F."/>
            <person name="Arnold F."/>
            <person name="Burton O.T."/>
            <person name="Du Z."/>
            <person name="Ewing A."/>
            <person name="Godsy E."/>
            <person name="Heisel S."/>
            <person name="Houmiel K.L."/>
            <person name="Jhaveri J."/>
            <person name="Lu J."/>
            <person name="Miller N.M."/>
            <person name="Norton S."/>
            <person name="Chen Q."/>
            <person name="Phoolcharoen W."/>
            <person name="Ohlin V."/>
            <person name="Ondrusek D."/>
            <person name="Pride N."/>
            <person name="Stricklin S.L."/>
            <person name="Sun J."/>
            <person name="Wheeler C."/>
            <person name="Wilson L."/>
            <person name="Zhu H."/>
            <person name="Wood D.W."/>
        </authorList>
    </citation>
    <scope>NUCLEOTIDE SEQUENCE [LARGE SCALE GENOMIC DNA]</scope>
    <source>
        <strain>K84 / ATCC BAA-868</strain>
    </source>
</reference>
<organism>
    <name type="scientific">Rhizobium rhizogenes (strain K84 / ATCC BAA-868)</name>
    <name type="common">Agrobacterium radiobacter</name>
    <dbReference type="NCBI Taxonomy" id="311403"/>
    <lineage>
        <taxon>Bacteria</taxon>
        <taxon>Pseudomonadati</taxon>
        <taxon>Pseudomonadota</taxon>
        <taxon>Alphaproteobacteria</taxon>
        <taxon>Hyphomicrobiales</taxon>
        <taxon>Rhizobiaceae</taxon>
        <taxon>Rhizobium/Agrobacterium group</taxon>
        <taxon>Rhizobium</taxon>
    </lineage>
</organism>
<gene>
    <name type="ordered locus">Arad_0352</name>
</gene>
<dbReference type="EC" id="3.5.4.2" evidence="1"/>
<dbReference type="EMBL" id="CP000628">
    <property type="protein sequence ID" value="ACM25064.1"/>
    <property type="molecule type" value="Genomic_DNA"/>
</dbReference>
<dbReference type="RefSeq" id="WP_012650769.1">
    <property type="nucleotide sequence ID" value="NC_011985.1"/>
</dbReference>
<dbReference type="SMR" id="B9J6V8"/>
<dbReference type="STRING" id="311403.Arad_0352"/>
<dbReference type="GeneID" id="86850708"/>
<dbReference type="KEGG" id="ara:Arad_0352"/>
<dbReference type="eggNOG" id="COG1816">
    <property type="taxonomic scope" value="Bacteria"/>
</dbReference>
<dbReference type="HOGENOM" id="CLU_039228_7_1_5"/>
<dbReference type="Proteomes" id="UP000001600">
    <property type="component" value="Chromosome 1"/>
</dbReference>
<dbReference type="GO" id="GO:0000034">
    <property type="term" value="F:adenine deaminase activity"/>
    <property type="evidence" value="ECO:0007669"/>
    <property type="project" value="UniProtKB-UniRule"/>
</dbReference>
<dbReference type="GO" id="GO:0008270">
    <property type="term" value="F:zinc ion binding"/>
    <property type="evidence" value="ECO:0007669"/>
    <property type="project" value="UniProtKB-UniRule"/>
</dbReference>
<dbReference type="GO" id="GO:0006146">
    <property type="term" value="P:adenine catabolic process"/>
    <property type="evidence" value="ECO:0007669"/>
    <property type="project" value="UniProtKB-UniRule"/>
</dbReference>
<dbReference type="GO" id="GO:0043103">
    <property type="term" value="P:hypoxanthine salvage"/>
    <property type="evidence" value="ECO:0007669"/>
    <property type="project" value="UniProtKB-UniRule"/>
</dbReference>
<dbReference type="GO" id="GO:0009117">
    <property type="term" value="P:nucleotide metabolic process"/>
    <property type="evidence" value="ECO:0007669"/>
    <property type="project" value="UniProtKB-KW"/>
</dbReference>
<dbReference type="CDD" id="cd01320">
    <property type="entry name" value="ADA"/>
    <property type="match status" value="1"/>
</dbReference>
<dbReference type="Gene3D" id="3.20.20.140">
    <property type="entry name" value="Metal-dependent hydrolases"/>
    <property type="match status" value="1"/>
</dbReference>
<dbReference type="HAMAP" id="MF_01962">
    <property type="entry name" value="Adenine_deaminase"/>
    <property type="match status" value="1"/>
</dbReference>
<dbReference type="InterPro" id="IPR001365">
    <property type="entry name" value="A_deaminase_dom"/>
</dbReference>
<dbReference type="InterPro" id="IPR028892">
    <property type="entry name" value="ADE"/>
</dbReference>
<dbReference type="InterPro" id="IPR006330">
    <property type="entry name" value="Ado/ade_deaminase"/>
</dbReference>
<dbReference type="InterPro" id="IPR032466">
    <property type="entry name" value="Metal_Hydrolase"/>
</dbReference>
<dbReference type="NCBIfam" id="TIGR01430">
    <property type="entry name" value="aden_deam"/>
    <property type="match status" value="1"/>
</dbReference>
<dbReference type="NCBIfam" id="NF006848">
    <property type="entry name" value="PRK09358.1-3"/>
    <property type="match status" value="1"/>
</dbReference>
<dbReference type="PANTHER" id="PTHR43114">
    <property type="entry name" value="ADENINE DEAMINASE"/>
    <property type="match status" value="1"/>
</dbReference>
<dbReference type="PANTHER" id="PTHR43114:SF6">
    <property type="entry name" value="ADENINE DEAMINASE"/>
    <property type="match status" value="1"/>
</dbReference>
<dbReference type="Pfam" id="PF00962">
    <property type="entry name" value="A_deaminase"/>
    <property type="match status" value="1"/>
</dbReference>
<dbReference type="SUPFAM" id="SSF51556">
    <property type="entry name" value="Metallo-dependent hydrolases"/>
    <property type="match status" value="1"/>
</dbReference>
<proteinExistence type="inferred from homology"/>
<name>ADE_RHIR8</name>
<comment type="function">
    <text evidence="1">Catalyzes the hydrolytic deamination of adenine to hypoxanthine. Plays an important role in the purine salvage pathway and in nitrogen catabolism.</text>
</comment>
<comment type="catalytic activity">
    <reaction evidence="1">
        <text>adenine + H2O + H(+) = hypoxanthine + NH4(+)</text>
        <dbReference type="Rhea" id="RHEA:23688"/>
        <dbReference type="ChEBI" id="CHEBI:15377"/>
        <dbReference type="ChEBI" id="CHEBI:15378"/>
        <dbReference type="ChEBI" id="CHEBI:16708"/>
        <dbReference type="ChEBI" id="CHEBI:17368"/>
        <dbReference type="ChEBI" id="CHEBI:28938"/>
        <dbReference type="EC" id="3.5.4.2"/>
    </reaction>
</comment>
<comment type="cofactor">
    <cofactor evidence="1">
        <name>Zn(2+)</name>
        <dbReference type="ChEBI" id="CHEBI:29105"/>
    </cofactor>
    <text evidence="1">Binds 1 zinc ion per subunit.</text>
</comment>
<comment type="similarity">
    <text evidence="1">Belongs to the metallo-dependent hydrolases superfamily. Adenosine and AMP deaminases family. Adenine deaminase type 2 subfamily.</text>
</comment>
<evidence type="ECO:0000255" key="1">
    <source>
        <dbReference type="HAMAP-Rule" id="MF_01962"/>
    </source>
</evidence>